<feature type="chain" id="PRO_1000021203" description="Recombination-associated protein RdgC">
    <location>
        <begin position="1"/>
        <end position="299"/>
    </location>
</feature>
<comment type="function">
    <text evidence="1">May be involved in recombination.</text>
</comment>
<comment type="subcellular location">
    <subcellularLocation>
        <location evidence="1">Cytoplasm</location>
        <location evidence="1">Nucleoid</location>
    </subcellularLocation>
</comment>
<comment type="similarity">
    <text evidence="1">Belongs to the RdgC family.</text>
</comment>
<organism>
    <name type="scientific">Bordetella parapertussis (strain 12822 / ATCC BAA-587 / NCTC 13253)</name>
    <dbReference type="NCBI Taxonomy" id="257311"/>
    <lineage>
        <taxon>Bacteria</taxon>
        <taxon>Pseudomonadati</taxon>
        <taxon>Pseudomonadota</taxon>
        <taxon>Betaproteobacteria</taxon>
        <taxon>Burkholderiales</taxon>
        <taxon>Alcaligenaceae</taxon>
        <taxon>Bordetella</taxon>
    </lineage>
</organism>
<sequence>MWFKNLKIYRLSAPWALNGDQLEECLARFAYQGGNNLEMQSLGWISPRENGLLAHTLNGQILLTLRAEKKLLPTTVVNQVAKARAQEIEEQQGYKPGRKQMKEIKERVTDELLPKAFSIYRDTRVWIDTVNHWLVIDAAASAKADEVIGLLAKTIDPLPLDNLYVEQSPAAAMTGWLAADEAPANFSIDQDTELRASGESRAAIRYVKHSIDVDDVRRHIQSGKQCTRLAMTWADRVSFVLTESLDVKRVAPLDVLKENPDAATQNDDEKFDSDMTLMTGEVAKLLAELVDSLGGEKRV</sequence>
<evidence type="ECO:0000255" key="1">
    <source>
        <dbReference type="HAMAP-Rule" id="MF_00194"/>
    </source>
</evidence>
<accession>Q7W7A7</accession>
<name>RDGC_BORPA</name>
<proteinExistence type="inferred from homology"/>
<protein>
    <recommendedName>
        <fullName evidence="1">Recombination-associated protein RdgC</fullName>
    </recommendedName>
</protein>
<dbReference type="EMBL" id="BX640431">
    <property type="protein sequence ID" value="CAE37910.1"/>
    <property type="molecule type" value="Genomic_DNA"/>
</dbReference>
<dbReference type="RefSeq" id="WP_010928635.1">
    <property type="nucleotide sequence ID" value="NC_002928.3"/>
</dbReference>
<dbReference type="SMR" id="Q7W7A7"/>
<dbReference type="GeneID" id="93204404"/>
<dbReference type="KEGG" id="bpa:BPP2618"/>
<dbReference type="HOGENOM" id="CLU_052038_0_1_4"/>
<dbReference type="Proteomes" id="UP000001421">
    <property type="component" value="Chromosome"/>
</dbReference>
<dbReference type="GO" id="GO:0043590">
    <property type="term" value="C:bacterial nucleoid"/>
    <property type="evidence" value="ECO:0007669"/>
    <property type="project" value="TreeGrafter"/>
</dbReference>
<dbReference type="GO" id="GO:0005737">
    <property type="term" value="C:cytoplasm"/>
    <property type="evidence" value="ECO:0007669"/>
    <property type="project" value="UniProtKB-UniRule"/>
</dbReference>
<dbReference type="GO" id="GO:0003690">
    <property type="term" value="F:double-stranded DNA binding"/>
    <property type="evidence" value="ECO:0007669"/>
    <property type="project" value="TreeGrafter"/>
</dbReference>
<dbReference type="GO" id="GO:0006310">
    <property type="term" value="P:DNA recombination"/>
    <property type="evidence" value="ECO:0007669"/>
    <property type="project" value="UniProtKB-UniRule"/>
</dbReference>
<dbReference type="GO" id="GO:0000018">
    <property type="term" value="P:regulation of DNA recombination"/>
    <property type="evidence" value="ECO:0007669"/>
    <property type="project" value="TreeGrafter"/>
</dbReference>
<dbReference type="HAMAP" id="MF_00194">
    <property type="entry name" value="RdgC"/>
    <property type="match status" value="1"/>
</dbReference>
<dbReference type="InterPro" id="IPR007476">
    <property type="entry name" value="RdgC"/>
</dbReference>
<dbReference type="NCBIfam" id="NF001463">
    <property type="entry name" value="PRK00321.1-4"/>
    <property type="match status" value="1"/>
</dbReference>
<dbReference type="NCBIfam" id="NF001464">
    <property type="entry name" value="PRK00321.1-5"/>
    <property type="match status" value="1"/>
</dbReference>
<dbReference type="PANTHER" id="PTHR38103">
    <property type="entry name" value="RECOMBINATION-ASSOCIATED PROTEIN RDGC"/>
    <property type="match status" value="1"/>
</dbReference>
<dbReference type="PANTHER" id="PTHR38103:SF1">
    <property type="entry name" value="RECOMBINATION-ASSOCIATED PROTEIN RDGC"/>
    <property type="match status" value="1"/>
</dbReference>
<dbReference type="Pfam" id="PF04381">
    <property type="entry name" value="RdgC"/>
    <property type="match status" value="1"/>
</dbReference>
<keyword id="KW-0963">Cytoplasm</keyword>
<keyword id="KW-0233">DNA recombination</keyword>
<reference key="1">
    <citation type="journal article" date="2003" name="Nat. Genet.">
        <title>Comparative analysis of the genome sequences of Bordetella pertussis, Bordetella parapertussis and Bordetella bronchiseptica.</title>
        <authorList>
            <person name="Parkhill J."/>
            <person name="Sebaihia M."/>
            <person name="Preston A."/>
            <person name="Murphy L.D."/>
            <person name="Thomson N.R."/>
            <person name="Harris D.E."/>
            <person name="Holden M.T.G."/>
            <person name="Churcher C.M."/>
            <person name="Bentley S.D."/>
            <person name="Mungall K.L."/>
            <person name="Cerdeno-Tarraga A.-M."/>
            <person name="Temple L."/>
            <person name="James K.D."/>
            <person name="Harris B."/>
            <person name="Quail M.A."/>
            <person name="Achtman M."/>
            <person name="Atkin R."/>
            <person name="Baker S."/>
            <person name="Basham D."/>
            <person name="Bason N."/>
            <person name="Cherevach I."/>
            <person name="Chillingworth T."/>
            <person name="Collins M."/>
            <person name="Cronin A."/>
            <person name="Davis P."/>
            <person name="Doggett J."/>
            <person name="Feltwell T."/>
            <person name="Goble A."/>
            <person name="Hamlin N."/>
            <person name="Hauser H."/>
            <person name="Holroyd S."/>
            <person name="Jagels K."/>
            <person name="Leather S."/>
            <person name="Moule S."/>
            <person name="Norberczak H."/>
            <person name="O'Neil S."/>
            <person name="Ormond D."/>
            <person name="Price C."/>
            <person name="Rabbinowitsch E."/>
            <person name="Rutter S."/>
            <person name="Sanders M."/>
            <person name="Saunders D."/>
            <person name="Seeger K."/>
            <person name="Sharp S."/>
            <person name="Simmonds M."/>
            <person name="Skelton J."/>
            <person name="Squares R."/>
            <person name="Squares S."/>
            <person name="Stevens K."/>
            <person name="Unwin L."/>
            <person name="Whitehead S."/>
            <person name="Barrell B.G."/>
            <person name="Maskell D.J."/>
        </authorList>
    </citation>
    <scope>NUCLEOTIDE SEQUENCE [LARGE SCALE GENOMIC DNA]</scope>
    <source>
        <strain>12822 / ATCC BAA-587 / NCTC 13253</strain>
    </source>
</reference>
<gene>
    <name evidence="1" type="primary">rdgC</name>
    <name type="ordered locus">BPP2618</name>
</gene>